<reference key="1">
    <citation type="journal article" date="2006" name="PLoS Genet.">
        <title>The complete genome sequence and comparative genome analysis of the high pathogenicity Yersinia enterocolitica strain 8081.</title>
        <authorList>
            <person name="Thomson N.R."/>
            <person name="Howard S."/>
            <person name="Wren B.W."/>
            <person name="Holden M.T.G."/>
            <person name="Crossman L."/>
            <person name="Challis G.L."/>
            <person name="Churcher C."/>
            <person name="Mungall K."/>
            <person name="Brooks K."/>
            <person name="Chillingworth T."/>
            <person name="Feltwell T."/>
            <person name="Abdellah Z."/>
            <person name="Hauser H."/>
            <person name="Jagels K."/>
            <person name="Maddison M."/>
            <person name="Moule S."/>
            <person name="Sanders M."/>
            <person name="Whitehead S."/>
            <person name="Quail M.A."/>
            <person name="Dougan G."/>
            <person name="Parkhill J."/>
            <person name="Prentice M.B."/>
        </authorList>
    </citation>
    <scope>NUCLEOTIDE SEQUENCE [LARGE SCALE GENOMIC DNA]</scope>
    <source>
        <strain>NCTC 13174 / 8081</strain>
    </source>
</reference>
<feature type="chain" id="PRO_1000081118" description="Glutamate 5-kinase">
    <location>
        <begin position="1"/>
        <end position="367"/>
    </location>
</feature>
<feature type="domain" description="PUA" evidence="1">
    <location>
        <begin position="275"/>
        <end position="353"/>
    </location>
</feature>
<feature type="binding site" evidence="1">
    <location>
        <position position="10"/>
    </location>
    <ligand>
        <name>ATP</name>
        <dbReference type="ChEBI" id="CHEBI:30616"/>
    </ligand>
</feature>
<feature type="binding site" evidence="1">
    <location>
        <position position="50"/>
    </location>
    <ligand>
        <name>substrate</name>
    </ligand>
</feature>
<feature type="binding site" evidence="1">
    <location>
        <position position="137"/>
    </location>
    <ligand>
        <name>substrate</name>
    </ligand>
</feature>
<feature type="binding site" evidence="1">
    <location>
        <position position="149"/>
    </location>
    <ligand>
        <name>substrate</name>
    </ligand>
</feature>
<feature type="binding site" evidence="1">
    <location>
        <begin position="169"/>
        <end position="170"/>
    </location>
    <ligand>
        <name>ATP</name>
        <dbReference type="ChEBI" id="CHEBI:30616"/>
    </ligand>
</feature>
<feature type="binding site" evidence="1">
    <location>
        <begin position="211"/>
        <end position="217"/>
    </location>
    <ligand>
        <name>ATP</name>
        <dbReference type="ChEBI" id="CHEBI:30616"/>
    </ligand>
</feature>
<comment type="function">
    <text evidence="1">Catalyzes the transfer of a phosphate group to glutamate to form L-glutamate 5-phosphate.</text>
</comment>
<comment type="catalytic activity">
    <reaction evidence="1">
        <text>L-glutamate + ATP = L-glutamyl 5-phosphate + ADP</text>
        <dbReference type="Rhea" id="RHEA:14877"/>
        <dbReference type="ChEBI" id="CHEBI:29985"/>
        <dbReference type="ChEBI" id="CHEBI:30616"/>
        <dbReference type="ChEBI" id="CHEBI:58274"/>
        <dbReference type="ChEBI" id="CHEBI:456216"/>
        <dbReference type="EC" id="2.7.2.11"/>
    </reaction>
</comment>
<comment type="pathway">
    <text evidence="1">Amino-acid biosynthesis; L-proline biosynthesis; L-glutamate 5-semialdehyde from L-glutamate: step 1/2.</text>
</comment>
<comment type="subcellular location">
    <subcellularLocation>
        <location evidence="1">Cytoplasm</location>
    </subcellularLocation>
</comment>
<comment type="similarity">
    <text evidence="1">Belongs to the glutamate 5-kinase family.</text>
</comment>
<protein>
    <recommendedName>
        <fullName evidence="1">Glutamate 5-kinase</fullName>
        <ecNumber evidence="1">2.7.2.11</ecNumber>
    </recommendedName>
    <alternativeName>
        <fullName evidence="1">Gamma-glutamyl kinase</fullName>
        <shortName evidence="1">GK</shortName>
    </alternativeName>
</protein>
<name>PROB_YERE8</name>
<gene>
    <name evidence="1" type="primary">proB</name>
    <name type="ordered locus">YE3202</name>
</gene>
<evidence type="ECO:0000255" key="1">
    <source>
        <dbReference type="HAMAP-Rule" id="MF_00456"/>
    </source>
</evidence>
<sequence length="367" mass="39109">MSGSQTLVVKLGTSVLTGGSRRLNRAHIVELVRQCAQQHAKGHRIVIVTSGAIAAGREHLGYPELPATIASKQLLAAVGQSRLIQLWEQLFSIYGIHIGQMLLTRADLEDRERFLNARDTMNALLDNRIVPVINENDAVATAEIKVGDNDNLSALAAILAGADKLLLLTDQAGLYTADPRNNPQAELIREVHGIDDALRGIAGDSVSGLGTGGMATKLQAADVACRAGIDVVIAAGSQVGVIADVIEGTPVGTRFHALETPLENRKRWIFGAPPAGEITVDDGAVTAIMERGSSLLPKGIRSVVGNFSRGEVIRIRNLSGRDLAHGVSRYNSDALRMLAGHHSQQISEILGYEYGPVAVHRDDMIVS</sequence>
<proteinExistence type="inferred from homology"/>
<dbReference type="EC" id="2.7.2.11" evidence="1"/>
<dbReference type="EMBL" id="AM286415">
    <property type="protein sequence ID" value="CAL13234.1"/>
    <property type="molecule type" value="Genomic_DNA"/>
</dbReference>
<dbReference type="RefSeq" id="WP_005167536.1">
    <property type="nucleotide sequence ID" value="NC_008800.1"/>
</dbReference>
<dbReference type="RefSeq" id="YP_001008385.1">
    <property type="nucleotide sequence ID" value="NC_008800.1"/>
</dbReference>
<dbReference type="SMR" id="A1JNX7"/>
<dbReference type="KEGG" id="yen:YE3202"/>
<dbReference type="PATRIC" id="fig|393305.7.peg.3405"/>
<dbReference type="eggNOG" id="COG0263">
    <property type="taxonomic scope" value="Bacteria"/>
</dbReference>
<dbReference type="HOGENOM" id="CLU_025400_2_0_6"/>
<dbReference type="OrthoDB" id="9804434at2"/>
<dbReference type="UniPathway" id="UPA00098">
    <property type="reaction ID" value="UER00359"/>
</dbReference>
<dbReference type="Proteomes" id="UP000000642">
    <property type="component" value="Chromosome"/>
</dbReference>
<dbReference type="GO" id="GO:0005829">
    <property type="term" value="C:cytosol"/>
    <property type="evidence" value="ECO:0007669"/>
    <property type="project" value="TreeGrafter"/>
</dbReference>
<dbReference type="GO" id="GO:0005524">
    <property type="term" value="F:ATP binding"/>
    <property type="evidence" value="ECO:0007669"/>
    <property type="project" value="UniProtKB-KW"/>
</dbReference>
<dbReference type="GO" id="GO:0004349">
    <property type="term" value="F:glutamate 5-kinase activity"/>
    <property type="evidence" value="ECO:0007669"/>
    <property type="project" value="UniProtKB-UniRule"/>
</dbReference>
<dbReference type="GO" id="GO:0003723">
    <property type="term" value="F:RNA binding"/>
    <property type="evidence" value="ECO:0007669"/>
    <property type="project" value="InterPro"/>
</dbReference>
<dbReference type="GO" id="GO:0055129">
    <property type="term" value="P:L-proline biosynthetic process"/>
    <property type="evidence" value="ECO:0007669"/>
    <property type="project" value="UniProtKB-UniRule"/>
</dbReference>
<dbReference type="CDD" id="cd04242">
    <property type="entry name" value="AAK_G5K_ProB"/>
    <property type="match status" value="1"/>
</dbReference>
<dbReference type="CDD" id="cd21157">
    <property type="entry name" value="PUA_G5K"/>
    <property type="match status" value="1"/>
</dbReference>
<dbReference type="FunFam" id="2.30.130.10:FF:000003">
    <property type="entry name" value="Glutamate 5-kinase"/>
    <property type="match status" value="1"/>
</dbReference>
<dbReference type="FunFam" id="3.40.1160.10:FF:000006">
    <property type="entry name" value="Glutamate 5-kinase"/>
    <property type="match status" value="1"/>
</dbReference>
<dbReference type="Gene3D" id="3.40.1160.10">
    <property type="entry name" value="Acetylglutamate kinase-like"/>
    <property type="match status" value="2"/>
</dbReference>
<dbReference type="Gene3D" id="2.30.130.10">
    <property type="entry name" value="PUA domain"/>
    <property type="match status" value="1"/>
</dbReference>
<dbReference type="HAMAP" id="MF_00456">
    <property type="entry name" value="ProB"/>
    <property type="match status" value="1"/>
</dbReference>
<dbReference type="InterPro" id="IPR036393">
    <property type="entry name" value="AceGlu_kinase-like_sf"/>
</dbReference>
<dbReference type="InterPro" id="IPR001048">
    <property type="entry name" value="Asp/Glu/Uridylate_kinase"/>
</dbReference>
<dbReference type="InterPro" id="IPR041739">
    <property type="entry name" value="G5K_ProB"/>
</dbReference>
<dbReference type="InterPro" id="IPR001057">
    <property type="entry name" value="Glu/AcGlu_kinase"/>
</dbReference>
<dbReference type="InterPro" id="IPR011529">
    <property type="entry name" value="Glu_5kinase"/>
</dbReference>
<dbReference type="InterPro" id="IPR005715">
    <property type="entry name" value="Glu_5kinase/COase_Synthase"/>
</dbReference>
<dbReference type="InterPro" id="IPR019797">
    <property type="entry name" value="Glutamate_5-kinase_CS"/>
</dbReference>
<dbReference type="InterPro" id="IPR002478">
    <property type="entry name" value="PUA"/>
</dbReference>
<dbReference type="InterPro" id="IPR015947">
    <property type="entry name" value="PUA-like_sf"/>
</dbReference>
<dbReference type="InterPro" id="IPR036974">
    <property type="entry name" value="PUA_sf"/>
</dbReference>
<dbReference type="NCBIfam" id="TIGR01027">
    <property type="entry name" value="proB"/>
    <property type="match status" value="1"/>
</dbReference>
<dbReference type="PANTHER" id="PTHR43654">
    <property type="entry name" value="GLUTAMATE 5-KINASE"/>
    <property type="match status" value="1"/>
</dbReference>
<dbReference type="PANTHER" id="PTHR43654:SF1">
    <property type="entry name" value="ISOPENTENYL PHOSPHATE KINASE"/>
    <property type="match status" value="1"/>
</dbReference>
<dbReference type="Pfam" id="PF00696">
    <property type="entry name" value="AA_kinase"/>
    <property type="match status" value="1"/>
</dbReference>
<dbReference type="Pfam" id="PF01472">
    <property type="entry name" value="PUA"/>
    <property type="match status" value="1"/>
</dbReference>
<dbReference type="PIRSF" id="PIRSF000729">
    <property type="entry name" value="GK"/>
    <property type="match status" value="1"/>
</dbReference>
<dbReference type="PRINTS" id="PR00474">
    <property type="entry name" value="GLU5KINASE"/>
</dbReference>
<dbReference type="SMART" id="SM00359">
    <property type="entry name" value="PUA"/>
    <property type="match status" value="1"/>
</dbReference>
<dbReference type="SUPFAM" id="SSF53633">
    <property type="entry name" value="Carbamate kinase-like"/>
    <property type="match status" value="1"/>
</dbReference>
<dbReference type="SUPFAM" id="SSF88697">
    <property type="entry name" value="PUA domain-like"/>
    <property type="match status" value="1"/>
</dbReference>
<dbReference type="PROSITE" id="PS00902">
    <property type="entry name" value="GLUTAMATE_5_KINASE"/>
    <property type="match status" value="1"/>
</dbReference>
<dbReference type="PROSITE" id="PS50890">
    <property type="entry name" value="PUA"/>
    <property type="match status" value="1"/>
</dbReference>
<keyword id="KW-0028">Amino-acid biosynthesis</keyword>
<keyword id="KW-0067">ATP-binding</keyword>
<keyword id="KW-0963">Cytoplasm</keyword>
<keyword id="KW-0418">Kinase</keyword>
<keyword id="KW-0547">Nucleotide-binding</keyword>
<keyword id="KW-0641">Proline biosynthesis</keyword>
<keyword id="KW-0808">Transferase</keyword>
<organism>
    <name type="scientific">Yersinia enterocolitica serotype O:8 / biotype 1B (strain NCTC 13174 / 8081)</name>
    <dbReference type="NCBI Taxonomy" id="393305"/>
    <lineage>
        <taxon>Bacteria</taxon>
        <taxon>Pseudomonadati</taxon>
        <taxon>Pseudomonadota</taxon>
        <taxon>Gammaproteobacteria</taxon>
        <taxon>Enterobacterales</taxon>
        <taxon>Yersiniaceae</taxon>
        <taxon>Yersinia</taxon>
    </lineage>
</organism>
<accession>A1JNX7</accession>